<reference key="1">
    <citation type="journal article" date="2003" name="Nature">
        <title>The genome of a motile marine Synechococcus.</title>
        <authorList>
            <person name="Palenik B."/>
            <person name="Brahamsha B."/>
            <person name="Larimer F.W."/>
            <person name="Land M.L."/>
            <person name="Hauser L."/>
            <person name="Chain P."/>
            <person name="Lamerdin J.E."/>
            <person name="Regala W."/>
            <person name="Allen E.E."/>
            <person name="McCarren J."/>
            <person name="Paulsen I.T."/>
            <person name="Dufresne A."/>
            <person name="Partensky F."/>
            <person name="Webb E.A."/>
            <person name="Waterbury J."/>
        </authorList>
    </citation>
    <scope>NUCLEOTIDE SEQUENCE [LARGE SCALE GENOMIC DNA]</scope>
    <source>
        <strain>WH8102</strain>
    </source>
</reference>
<name>CINAL_PARMW</name>
<sequence>MAEAGVEILCVGTELLLGDILNGNARWIAERLAGLGLPHYRQTVVGDNRQRLAAAAREASGRCRVLITTGGLGPTPDDLTTESLAAAFETPLEERPELWDEIQANLSAGGRAVAPSNRRQAFLPRGAAVLPNPLGSAPGMIWSPLPDFTILTFPGVPSEMRAMFEATAEPWLRRHGGATGVFVSRLLRFSGIGESNLAEQVADLLEGVNPTVAPYASLGDVKLRLTACGSSAESAAALLDPVEAELRRRTAQHCYGTTDDSLASVVLALLQRSGQTLSVAESCTGGGLGAALTAVPGSSAVFAGGVIAYSNAVKQQLLDVPAELLERHGAVSDPVVAAMAEGARQRLGTDWSIAVSGIAGPGGGTDEKPVGLVHLAVSGPDGCEATAERFGDRRGRGAVQQLTVIRALDRLRRRLLAQS</sequence>
<dbReference type="EMBL" id="BX569689">
    <property type="protein sequence ID" value="CAE06776.1"/>
    <property type="molecule type" value="Genomic_DNA"/>
</dbReference>
<dbReference type="RefSeq" id="WP_011127137.1">
    <property type="nucleotide sequence ID" value="NC_005070.1"/>
</dbReference>
<dbReference type="SMR" id="Q7U9J5"/>
<dbReference type="STRING" id="84588.SYNW0261"/>
<dbReference type="KEGG" id="syw:SYNW0261"/>
<dbReference type="eggNOG" id="COG1058">
    <property type="taxonomic scope" value="Bacteria"/>
</dbReference>
<dbReference type="eggNOG" id="COG1546">
    <property type="taxonomic scope" value="Bacteria"/>
</dbReference>
<dbReference type="HOGENOM" id="CLU_030805_9_3_3"/>
<dbReference type="Proteomes" id="UP000001422">
    <property type="component" value="Chromosome"/>
</dbReference>
<dbReference type="CDD" id="cd00885">
    <property type="entry name" value="cinA"/>
    <property type="match status" value="1"/>
</dbReference>
<dbReference type="Gene3D" id="3.30.70.2860">
    <property type="match status" value="1"/>
</dbReference>
<dbReference type="Gene3D" id="3.90.950.20">
    <property type="entry name" value="CinA-like"/>
    <property type="match status" value="1"/>
</dbReference>
<dbReference type="Gene3D" id="3.40.980.10">
    <property type="entry name" value="MoaB/Mog-like domain"/>
    <property type="match status" value="1"/>
</dbReference>
<dbReference type="HAMAP" id="MF_00226_B">
    <property type="entry name" value="CinA_B"/>
    <property type="match status" value="1"/>
</dbReference>
<dbReference type="InterPro" id="IPR050101">
    <property type="entry name" value="CinA"/>
</dbReference>
<dbReference type="InterPro" id="IPR036653">
    <property type="entry name" value="CinA-like_C"/>
</dbReference>
<dbReference type="InterPro" id="IPR008136">
    <property type="entry name" value="CinA_C"/>
</dbReference>
<dbReference type="InterPro" id="IPR041424">
    <property type="entry name" value="CinA_KH"/>
</dbReference>
<dbReference type="InterPro" id="IPR008135">
    <property type="entry name" value="Competence-induced_CinA"/>
</dbReference>
<dbReference type="InterPro" id="IPR036425">
    <property type="entry name" value="MoaB/Mog-like_dom_sf"/>
</dbReference>
<dbReference type="InterPro" id="IPR001453">
    <property type="entry name" value="MoaB/Mog_dom"/>
</dbReference>
<dbReference type="NCBIfam" id="TIGR00200">
    <property type="entry name" value="cinA_nterm"/>
    <property type="match status" value="1"/>
</dbReference>
<dbReference type="NCBIfam" id="TIGR00199">
    <property type="entry name" value="PncC_domain"/>
    <property type="match status" value="1"/>
</dbReference>
<dbReference type="NCBIfam" id="NF001813">
    <property type="entry name" value="PRK00549.1"/>
    <property type="match status" value="1"/>
</dbReference>
<dbReference type="PANTHER" id="PTHR13939">
    <property type="entry name" value="NICOTINAMIDE-NUCLEOTIDE AMIDOHYDROLASE PNCC"/>
    <property type="match status" value="1"/>
</dbReference>
<dbReference type="PANTHER" id="PTHR13939:SF0">
    <property type="entry name" value="NMN AMIDOHYDROLASE-LIKE PROTEIN YFAY"/>
    <property type="match status" value="1"/>
</dbReference>
<dbReference type="Pfam" id="PF02464">
    <property type="entry name" value="CinA"/>
    <property type="match status" value="1"/>
</dbReference>
<dbReference type="Pfam" id="PF18146">
    <property type="entry name" value="CinA_KH"/>
    <property type="match status" value="1"/>
</dbReference>
<dbReference type="Pfam" id="PF00994">
    <property type="entry name" value="MoCF_biosynth"/>
    <property type="match status" value="1"/>
</dbReference>
<dbReference type="PIRSF" id="PIRSF006728">
    <property type="entry name" value="CinA"/>
    <property type="match status" value="1"/>
</dbReference>
<dbReference type="SMART" id="SM00852">
    <property type="entry name" value="MoCF_biosynth"/>
    <property type="match status" value="1"/>
</dbReference>
<dbReference type="SUPFAM" id="SSF142433">
    <property type="entry name" value="CinA-like"/>
    <property type="match status" value="1"/>
</dbReference>
<dbReference type="SUPFAM" id="SSF53218">
    <property type="entry name" value="Molybdenum cofactor biosynthesis proteins"/>
    <property type="match status" value="1"/>
</dbReference>
<protein>
    <recommendedName>
        <fullName evidence="1">CinA-like protein</fullName>
    </recommendedName>
</protein>
<comment type="similarity">
    <text evidence="1">Belongs to the CinA family.</text>
</comment>
<feature type="chain" id="PRO_0000156784" description="CinA-like protein">
    <location>
        <begin position="1"/>
        <end position="419"/>
    </location>
</feature>
<evidence type="ECO:0000255" key="1">
    <source>
        <dbReference type="HAMAP-Rule" id="MF_00226"/>
    </source>
</evidence>
<organism>
    <name type="scientific">Parasynechococcus marenigrum (strain WH8102)</name>
    <dbReference type="NCBI Taxonomy" id="84588"/>
    <lineage>
        <taxon>Bacteria</taxon>
        <taxon>Bacillati</taxon>
        <taxon>Cyanobacteriota</taxon>
        <taxon>Cyanophyceae</taxon>
        <taxon>Synechococcales</taxon>
        <taxon>Prochlorococcaceae</taxon>
        <taxon>Parasynechococcus</taxon>
        <taxon>Parasynechococcus marenigrum</taxon>
    </lineage>
</organism>
<accession>Q7U9J5</accession>
<proteinExistence type="inferred from homology"/>
<gene>
    <name type="ordered locus">SYNW0261</name>
</gene>